<organism>
    <name type="scientific">Prochlorococcus marinus (strain AS9601)</name>
    <dbReference type="NCBI Taxonomy" id="146891"/>
    <lineage>
        <taxon>Bacteria</taxon>
        <taxon>Bacillati</taxon>
        <taxon>Cyanobacteriota</taxon>
        <taxon>Cyanophyceae</taxon>
        <taxon>Synechococcales</taxon>
        <taxon>Prochlorococcaceae</taxon>
        <taxon>Prochlorococcus</taxon>
    </lineage>
</organism>
<keyword id="KW-0963">Cytoplasm</keyword>
<keyword id="KW-0251">Elongation factor</keyword>
<keyword id="KW-0342">GTP-binding</keyword>
<keyword id="KW-0378">Hydrolase</keyword>
<keyword id="KW-0460">Magnesium</keyword>
<keyword id="KW-0479">Metal-binding</keyword>
<keyword id="KW-0547">Nucleotide-binding</keyword>
<keyword id="KW-0648">Protein biosynthesis</keyword>
<accession>A2BT83</accession>
<name>EFTU_PROMS</name>
<dbReference type="EC" id="3.6.5.3" evidence="2"/>
<dbReference type="EMBL" id="CP000551">
    <property type="protein sequence ID" value="ABM70994.1"/>
    <property type="molecule type" value="Genomic_DNA"/>
</dbReference>
<dbReference type="RefSeq" id="WP_011819121.1">
    <property type="nucleotide sequence ID" value="NC_008816.1"/>
</dbReference>
<dbReference type="SMR" id="A2BT83"/>
<dbReference type="STRING" id="146891.A9601_17111"/>
<dbReference type="KEGG" id="pmb:A9601_17111"/>
<dbReference type="eggNOG" id="COG0050">
    <property type="taxonomic scope" value="Bacteria"/>
</dbReference>
<dbReference type="HOGENOM" id="CLU_007265_0_1_3"/>
<dbReference type="OrthoDB" id="9804504at2"/>
<dbReference type="Proteomes" id="UP000002590">
    <property type="component" value="Chromosome"/>
</dbReference>
<dbReference type="GO" id="GO:0005829">
    <property type="term" value="C:cytosol"/>
    <property type="evidence" value="ECO:0007669"/>
    <property type="project" value="TreeGrafter"/>
</dbReference>
<dbReference type="GO" id="GO:0005525">
    <property type="term" value="F:GTP binding"/>
    <property type="evidence" value="ECO:0007669"/>
    <property type="project" value="UniProtKB-UniRule"/>
</dbReference>
<dbReference type="GO" id="GO:0003924">
    <property type="term" value="F:GTPase activity"/>
    <property type="evidence" value="ECO:0007669"/>
    <property type="project" value="InterPro"/>
</dbReference>
<dbReference type="GO" id="GO:0003746">
    <property type="term" value="F:translation elongation factor activity"/>
    <property type="evidence" value="ECO:0007669"/>
    <property type="project" value="UniProtKB-UniRule"/>
</dbReference>
<dbReference type="CDD" id="cd01884">
    <property type="entry name" value="EF_Tu"/>
    <property type="match status" value="1"/>
</dbReference>
<dbReference type="CDD" id="cd03697">
    <property type="entry name" value="EFTU_II"/>
    <property type="match status" value="1"/>
</dbReference>
<dbReference type="CDD" id="cd03707">
    <property type="entry name" value="EFTU_III"/>
    <property type="match status" value="1"/>
</dbReference>
<dbReference type="FunFam" id="2.40.30.10:FF:000001">
    <property type="entry name" value="Elongation factor Tu"/>
    <property type="match status" value="1"/>
</dbReference>
<dbReference type="FunFam" id="2.40.30.10:FF:000046">
    <property type="entry name" value="Elongation factor Tu"/>
    <property type="match status" value="1"/>
</dbReference>
<dbReference type="FunFam" id="3.40.50.300:FF:000003">
    <property type="entry name" value="Elongation factor Tu"/>
    <property type="match status" value="1"/>
</dbReference>
<dbReference type="Gene3D" id="3.40.50.300">
    <property type="entry name" value="P-loop containing nucleotide triphosphate hydrolases"/>
    <property type="match status" value="1"/>
</dbReference>
<dbReference type="Gene3D" id="2.40.30.10">
    <property type="entry name" value="Translation factors"/>
    <property type="match status" value="2"/>
</dbReference>
<dbReference type="HAMAP" id="MF_00118_B">
    <property type="entry name" value="EF_Tu_B"/>
    <property type="match status" value="1"/>
</dbReference>
<dbReference type="InterPro" id="IPR041709">
    <property type="entry name" value="EF-Tu_GTP-bd"/>
</dbReference>
<dbReference type="InterPro" id="IPR050055">
    <property type="entry name" value="EF-Tu_GTPase"/>
</dbReference>
<dbReference type="InterPro" id="IPR004161">
    <property type="entry name" value="EFTu-like_2"/>
</dbReference>
<dbReference type="InterPro" id="IPR033720">
    <property type="entry name" value="EFTU_2"/>
</dbReference>
<dbReference type="InterPro" id="IPR031157">
    <property type="entry name" value="G_TR_CS"/>
</dbReference>
<dbReference type="InterPro" id="IPR027417">
    <property type="entry name" value="P-loop_NTPase"/>
</dbReference>
<dbReference type="InterPro" id="IPR005225">
    <property type="entry name" value="Small_GTP-bd"/>
</dbReference>
<dbReference type="InterPro" id="IPR000795">
    <property type="entry name" value="T_Tr_GTP-bd_dom"/>
</dbReference>
<dbReference type="InterPro" id="IPR009000">
    <property type="entry name" value="Transl_B-barrel_sf"/>
</dbReference>
<dbReference type="InterPro" id="IPR009001">
    <property type="entry name" value="Transl_elong_EF1A/Init_IF2_C"/>
</dbReference>
<dbReference type="InterPro" id="IPR004541">
    <property type="entry name" value="Transl_elong_EFTu/EF1A_bac/org"/>
</dbReference>
<dbReference type="InterPro" id="IPR004160">
    <property type="entry name" value="Transl_elong_EFTu/EF1A_C"/>
</dbReference>
<dbReference type="NCBIfam" id="TIGR00485">
    <property type="entry name" value="EF-Tu"/>
    <property type="match status" value="1"/>
</dbReference>
<dbReference type="NCBIfam" id="NF000766">
    <property type="entry name" value="PRK00049.1"/>
    <property type="match status" value="1"/>
</dbReference>
<dbReference type="NCBIfam" id="NF009372">
    <property type="entry name" value="PRK12735.1"/>
    <property type="match status" value="1"/>
</dbReference>
<dbReference type="NCBIfam" id="NF009373">
    <property type="entry name" value="PRK12736.1"/>
    <property type="match status" value="1"/>
</dbReference>
<dbReference type="NCBIfam" id="TIGR00231">
    <property type="entry name" value="small_GTP"/>
    <property type="match status" value="1"/>
</dbReference>
<dbReference type="PANTHER" id="PTHR43721:SF22">
    <property type="entry name" value="ELONGATION FACTOR TU, MITOCHONDRIAL"/>
    <property type="match status" value="1"/>
</dbReference>
<dbReference type="PANTHER" id="PTHR43721">
    <property type="entry name" value="ELONGATION FACTOR TU-RELATED"/>
    <property type="match status" value="1"/>
</dbReference>
<dbReference type="Pfam" id="PF00009">
    <property type="entry name" value="GTP_EFTU"/>
    <property type="match status" value="1"/>
</dbReference>
<dbReference type="Pfam" id="PF03144">
    <property type="entry name" value="GTP_EFTU_D2"/>
    <property type="match status" value="1"/>
</dbReference>
<dbReference type="Pfam" id="PF03143">
    <property type="entry name" value="GTP_EFTU_D3"/>
    <property type="match status" value="1"/>
</dbReference>
<dbReference type="PRINTS" id="PR00315">
    <property type="entry name" value="ELONGATNFCT"/>
</dbReference>
<dbReference type="SUPFAM" id="SSF50465">
    <property type="entry name" value="EF-Tu/eEF-1alpha/eIF2-gamma C-terminal domain"/>
    <property type="match status" value="1"/>
</dbReference>
<dbReference type="SUPFAM" id="SSF52540">
    <property type="entry name" value="P-loop containing nucleoside triphosphate hydrolases"/>
    <property type="match status" value="1"/>
</dbReference>
<dbReference type="SUPFAM" id="SSF50447">
    <property type="entry name" value="Translation proteins"/>
    <property type="match status" value="1"/>
</dbReference>
<dbReference type="PROSITE" id="PS00301">
    <property type="entry name" value="G_TR_1"/>
    <property type="match status" value="1"/>
</dbReference>
<dbReference type="PROSITE" id="PS51722">
    <property type="entry name" value="G_TR_2"/>
    <property type="match status" value="1"/>
</dbReference>
<proteinExistence type="inferred from homology"/>
<reference key="1">
    <citation type="journal article" date="2007" name="PLoS Genet.">
        <title>Patterns and implications of gene gain and loss in the evolution of Prochlorococcus.</title>
        <authorList>
            <person name="Kettler G.C."/>
            <person name="Martiny A.C."/>
            <person name="Huang K."/>
            <person name="Zucker J."/>
            <person name="Coleman M.L."/>
            <person name="Rodrigue S."/>
            <person name="Chen F."/>
            <person name="Lapidus A."/>
            <person name="Ferriera S."/>
            <person name="Johnson J."/>
            <person name="Steglich C."/>
            <person name="Church G.M."/>
            <person name="Richardson P."/>
            <person name="Chisholm S.W."/>
        </authorList>
    </citation>
    <scope>NUCLEOTIDE SEQUENCE [LARGE SCALE GENOMIC DNA]</scope>
    <source>
        <strain>AS9601</strain>
    </source>
</reference>
<comment type="function">
    <text evidence="2">GTP hydrolase that promotes the GTP-dependent binding of aminoacyl-tRNA to the A-site of ribosomes during protein biosynthesis.</text>
</comment>
<comment type="catalytic activity">
    <reaction evidence="2">
        <text>GTP + H2O = GDP + phosphate + H(+)</text>
        <dbReference type="Rhea" id="RHEA:19669"/>
        <dbReference type="ChEBI" id="CHEBI:15377"/>
        <dbReference type="ChEBI" id="CHEBI:15378"/>
        <dbReference type="ChEBI" id="CHEBI:37565"/>
        <dbReference type="ChEBI" id="CHEBI:43474"/>
        <dbReference type="ChEBI" id="CHEBI:58189"/>
        <dbReference type="EC" id="3.6.5.3"/>
    </reaction>
    <physiologicalReaction direction="left-to-right" evidence="2">
        <dbReference type="Rhea" id="RHEA:19670"/>
    </physiologicalReaction>
</comment>
<comment type="subunit">
    <text evidence="2">Monomer.</text>
</comment>
<comment type="subcellular location">
    <subcellularLocation>
        <location evidence="2">Cytoplasm</location>
    </subcellularLocation>
</comment>
<comment type="similarity">
    <text evidence="2">Belongs to the TRAFAC class translation factor GTPase superfamily. Classic translation factor GTPase family. EF-Tu/EF-1A subfamily.</text>
</comment>
<feature type="chain" id="PRO_1000015731" description="Elongation factor Tu">
    <location>
        <begin position="1"/>
        <end position="399"/>
    </location>
</feature>
<feature type="domain" description="tr-type G">
    <location>
        <begin position="10"/>
        <end position="204"/>
    </location>
</feature>
<feature type="region of interest" description="G1" evidence="1">
    <location>
        <begin position="19"/>
        <end position="26"/>
    </location>
</feature>
<feature type="region of interest" description="G2" evidence="1">
    <location>
        <begin position="60"/>
        <end position="64"/>
    </location>
</feature>
<feature type="region of interest" description="G3" evidence="1">
    <location>
        <begin position="81"/>
        <end position="84"/>
    </location>
</feature>
<feature type="region of interest" description="G4" evidence="1">
    <location>
        <begin position="136"/>
        <end position="139"/>
    </location>
</feature>
<feature type="region of interest" description="G5" evidence="1">
    <location>
        <begin position="174"/>
        <end position="176"/>
    </location>
</feature>
<feature type="binding site" evidence="2">
    <location>
        <begin position="19"/>
        <end position="26"/>
    </location>
    <ligand>
        <name>GTP</name>
        <dbReference type="ChEBI" id="CHEBI:37565"/>
    </ligand>
</feature>
<feature type="binding site" evidence="2">
    <location>
        <position position="26"/>
    </location>
    <ligand>
        <name>Mg(2+)</name>
        <dbReference type="ChEBI" id="CHEBI:18420"/>
    </ligand>
</feature>
<feature type="binding site" evidence="2">
    <location>
        <begin position="81"/>
        <end position="85"/>
    </location>
    <ligand>
        <name>GTP</name>
        <dbReference type="ChEBI" id="CHEBI:37565"/>
    </ligand>
</feature>
<feature type="binding site" evidence="2">
    <location>
        <begin position="136"/>
        <end position="139"/>
    </location>
    <ligand>
        <name>GTP</name>
        <dbReference type="ChEBI" id="CHEBI:37565"/>
    </ligand>
</feature>
<sequence length="399" mass="43652">MAREKFERNKPHVNIGTIGHVDHGKTTLTAAITNVLAKKGQAQAQDYGDIDGAPEERERGITINTAHVEYETEGRHYAHVDCPGHADYVKNMITGAAQMDGAILVCAATDGPMAQTKEHILLAKQVGVPALVVALNKCDMVDDEEIIELVEMEIRELLDSYDFPGDDIPIVQVSGLKALEGDTTWESKIEELMKAVDASIPEPEREVDKPFLMAVEDVFSITGRGTVATGRIERGKVKVGEEVEIVGIRDTRVTTVTGVEMFRKLLDEGMAGDNVGLLLRGVQKEDIERGMVLVKKGSITPHTQFEGEVYVLKKEEGGRHTPFFAGYRPQFYIRTTDVTGQITAFTSDDGSNVEMVMPGDRIKMTGELICPVAIEQGMRFAIREGGRTIGAGVVSKILK</sequence>
<protein>
    <recommendedName>
        <fullName evidence="2">Elongation factor Tu</fullName>
        <shortName evidence="2">EF-Tu</shortName>
        <ecNumber evidence="2">3.6.5.3</ecNumber>
    </recommendedName>
</protein>
<gene>
    <name evidence="2" type="primary">tuf</name>
    <name type="ordered locus">A9601_17111</name>
</gene>
<evidence type="ECO:0000250" key="1"/>
<evidence type="ECO:0000255" key="2">
    <source>
        <dbReference type="HAMAP-Rule" id="MF_00118"/>
    </source>
</evidence>